<gene>
    <name type="primary">rps7</name>
    <name type="ordered locus">Grc000075</name>
</gene>
<keyword id="KW-0150">Chloroplast</keyword>
<keyword id="KW-0934">Plastid</keyword>
<keyword id="KW-0687">Ribonucleoprotein</keyword>
<keyword id="KW-0689">Ribosomal protein</keyword>
<keyword id="KW-0694">RNA-binding</keyword>
<keyword id="KW-0699">rRNA-binding</keyword>
<sequence>MSRRNKSKKRLIQKDPVHESKLVSMLTARILKSGKKGLAYKIVYEALDIINKKTSHDSLEILEKAIRNATPLVEVKSRRIGGSTYQVPMEVRAYRGTNLALRWITMFAHTRSGRSMAFRLANEIIDASNESGNTIRKREETHRMAEANKAFAHYRY</sequence>
<reference key="1">
    <citation type="journal article" date="2004" name="J. Mol. Evol.">
        <title>Comparative analysis of the complete plastid genome sequence of the red alga Gracilaria tenuistipitata var. liui provides insights into the evolution of rhodoplasts and their relationship to other plastids.</title>
        <authorList>
            <person name="Hagopian J.C."/>
            <person name="Reis M."/>
            <person name="Kitajima J.P."/>
            <person name="Bhattacharya D."/>
            <person name="de Oliveira M.C."/>
        </authorList>
    </citation>
    <scope>NUCLEOTIDE SEQUENCE [LARGE SCALE GENOMIC DNA]</scope>
</reference>
<feature type="chain" id="PRO_0000124457" description="Small ribosomal subunit protein uS7c">
    <location>
        <begin position="1"/>
        <end position="156"/>
    </location>
</feature>
<organism>
    <name type="scientific">Gracilaria tenuistipitata var. liui</name>
    <name type="common">Red alga</name>
    <dbReference type="NCBI Taxonomy" id="285951"/>
    <lineage>
        <taxon>Eukaryota</taxon>
        <taxon>Rhodophyta</taxon>
        <taxon>Florideophyceae</taxon>
        <taxon>Rhodymeniophycidae</taxon>
        <taxon>Gracilariales</taxon>
        <taxon>Gracilariaceae</taxon>
        <taxon>Gracilaria</taxon>
        <taxon>Gracilaria tenuistipitata</taxon>
    </lineage>
</organism>
<proteinExistence type="inferred from homology"/>
<protein>
    <recommendedName>
        <fullName evidence="2">Small ribosomal subunit protein uS7c</fullName>
    </recommendedName>
    <alternativeName>
        <fullName>30S ribosomal protein S7, chloroplastic</fullName>
    </alternativeName>
</protein>
<accession>Q6B8X9</accession>
<geneLocation type="chloroplast"/>
<evidence type="ECO:0000250" key="1"/>
<evidence type="ECO:0000305" key="2"/>
<name>RR7_GRATL</name>
<dbReference type="EMBL" id="AY673996">
    <property type="protein sequence ID" value="AAT79656.1"/>
    <property type="molecule type" value="Genomic_DNA"/>
</dbReference>
<dbReference type="RefSeq" id="YP_063581.1">
    <property type="nucleotide sequence ID" value="NC_006137.1"/>
</dbReference>
<dbReference type="SMR" id="Q6B8X9"/>
<dbReference type="GeneID" id="2943999"/>
<dbReference type="GO" id="GO:0009507">
    <property type="term" value="C:chloroplast"/>
    <property type="evidence" value="ECO:0007669"/>
    <property type="project" value="UniProtKB-SubCell"/>
</dbReference>
<dbReference type="GO" id="GO:0015935">
    <property type="term" value="C:small ribosomal subunit"/>
    <property type="evidence" value="ECO:0007669"/>
    <property type="project" value="InterPro"/>
</dbReference>
<dbReference type="GO" id="GO:0019843">
    <property type="term" value="F:rRNA binding"/>
    <property type="evidence" value="ECO:0007669"/>
    <property type="project" value="UniProtKB-UniRule"/>
</dbReference>
<dbReference type="GO" id="GO:0003735">
    <property type="term" value="F:structural constituent of ribosome"/>
    <property type="evidence" value="ECO:0007669"/>
    <property type="project" value="InterPro"/>
</dbReference>
<dbReference type="GO" id="GO:0006412">
    <property type="term" value="P:translation"/>
    <property type="evidence" value="ECO:0007669"/>
    <property type="project" value="UniProtKB-UniRule"/>
</dbReference>
<dbReference type="CDD" id="cd14871">
    <property type="entry name" value="uS7_Chloroplast"/>
    <property type="match status" value="1"/>
</dbReference>
<dbReference type="FunFam" id="1.10.455.10:FF:000001">
    <property type="entry name" value="30S ribosomal protein S7"/>
    <property type="match status" value="1"/>
</dbReference>
<dbReference type="Gene3D" id="1.10.455.10">
    <property type="entry name" value="Ribosomal protein S7 domain"/>
    <property type="match status" value="1"/>
</dbReference>
<dbReference type="HAMAP" id="MF_00480_B">
    <property type="entry name" value="Ribosomal_uS7_B"/>
    <property type="match status" value="1"/>
</dbReference>
<dbReference type="InterPro" id="IPR000235">
    <property type="entry name" value="Ribosomal_uS7"/>
</dbReference>
<dbReference type="InterPro" id="IPR005717">
    <property type="entry name" value="Ribosomal_uS7_bac/org-type"/>
</dbReference>
<dbReference type="InterPro" id="IPR020606">
    <property type="entry name" value="Ribosomal_uS7_CS"/>
</dbReference>
<dbReference type="InterPro" id="IPR023798">
    <property type="entry name" value="Ribosomal_uS7_dom"/>
</dbReference>
<dbReference type="InterPro" id="IPR036823">
    <property type="entry name" value="Ribosomal_uS7_dom_sf"/>
</dbReference>
<dbReference type="NCBIfam" id="TIGR01029">
    <property type="entry name" value="rpsG_bact"/>
    <property type="match status" value="1"/>
</dbReference>
<dbReference type="PANTHER" id="PTHR11205">
    <property type="entry name" value="RIBOSOMAL PROTEIN S7"/>
    <property type="match status" value="1"/>
</dbReference>
<dbReference type="Pfam" id="PF00177">
    <property type="entry name" value="Ribosomal_S7"/>
    <property type="match status" value="1"/>
</dbReference>
<dbReference type="PIRSF" id="PIRSF002122">
    <property type="entry name" value="RPS7p_RPS7a_RPS5e_RPS7o"/>
    <property type="match status" value="1"/>
</dbReference>
<dbReference type="SUPFAM" id="SSF47973">
    <property type="entry name" value="Ribosomal protein S7"/>
    <property type="match status" value="1"/>
</dbReference>
<dbReference type="PROSITE" id="PS00052">
    <property type="entry name" value="RIBOSOMAL_S7"/>
    <property type="match status" value="1"/>
</dbReference>
<comment type="function">
    <text evidence="1">One of the primary rRNA binding proteins, it binds directly to 16S rRNA where it nucleates assembly of the head domain of the 30S subunit.</text>
</comment>
<comment type="subunit">
    <text>Part of the 30S ribosomal subunit.</text>
</comment>
<comment type="subcellular location">
    <subcellularLocation>
        <location>Plastid</location>
        <location>Chloroplast</location>
    </subcellularLocation>
</comment>
<comment type="similarity">
    <text evidence="2">Belongs to the universal ribosomal protein uS7 family.</text>
</comment>